<proteinExistence type="evidence at protein level"/>
<organism>
    <name type="scientific">Streptomyces coelicolor (strain ATCC BAA-471 / A3(2) / M145)</name>
    <dbReference type="NCBI Taxonomy" id="100226"/>
    <lineage>
        <taxon>Bacteria</taxon>
        <taxon>Bacillati</taxon>
        <taxon>Actinomycetota</taxon>
        <taxon>Actinomycetes</taxon>
        <taxon>Kitasatosporales</taxon>
        <taxon>Streptomycetaceae</taxon>
        <taxon>Streptomyces</taxon>
        <taxon>Streptomyces albidoflavus group</taxon>
    </lineage>
</organism>
<keyword id="KW-0002">3D-structure</keyword>
<keyword id="KW-0963">Cytoplasm</keyword>
<keyword id="KW-0275">Fatty acid biosynthesis</keyword>
<keyword id="KW-0276">Fatty acid metabolism</keyword>
<keyword id="KW-0444">Lipid biosynthesis</keyword>
<keyword id="KW-0443">Lipid metabolism</keyword>
<keyword id="KW-0460">Magnesium</keyword>
<keyword id="KW-0479">Metal-binding</keyword>
<keyword id="KW-1185">Reference proteome</keyword>
<keyword id="KW-0808">Transferase</keyword>
<accession>O86785</accession>
<sequence>MSIIGVGIDVAEVERFGAALERTPALAGRLFLESELLLPGGERRGVASLAARFAAKEALAKALGAPAGLLWTDAEVWVEAGGRPRLRVTGTVAARAAELGVASWHVSLSHDAGIASAVVIAEG</sequence>
<protein>
    <recommendedName>
        <fullName evidence="1">Holo-[acyl-carrier-protein] synthase</fullName>
        <shortName evidence="1">Holo-ACP synthase</shortName>
        <ecNumber evidence="1">2.7.8.7</ecNumber>
    </recommendedName>
    <alternativeName>
        <fullName evidence="1">4'-phosphopantetheinyl transferase AcpS</fullName>
    </alternativeName>
</protein>
<dbReference type="EC" id="2.7.8.7" evidence="1"/>
<dbReference type="EMBL" id="AL939121">
    <property type="protein sequence ID" value="CAA20400.1"/>
    <property type="molecule type" value="Genomic_DNA"/>
</dbReference>
<dbReference type="PIR" id="T35573">
    <property type="entry name" value="T35573"/>
</dbReference>
<dbReference type="RefSeq" id="NP_628902.1">
    <property type="nucleotide sequence ID" value="NC_003888.3"/>
</dbReference>
<dbReference type="RefSeq" id="WP_003974229.1">
    <property type="nucleotide sequence ID" value="NZ_VNID01000016.1"/>
</dbReference>
<dbReference type="PDB" id="2JBZ">
    <property type="method" value="X-ray"/>
    <property type="resolution" value="1.62 A"/>
    <property type="chains" value="A=1-123"/>
</dbReference>
<dbReference type="PDB" id="2JCA">
    <property type="method" value="X-ray"/>
    <property type="resolution" value="1.98 A"/>
    <property type="chains" value="A/B/C=1-123"/>
</dbReference>
<dbReference type="PDB" id="2WDO">
    <property type="method" value="X-ray"/>
    <property type="resolution" value="1.56 A"/>
    <property type="chains" value="A=1-123"/>
</dbReference>
<dbReference type="PDB" id="2WDS">
    <property type="method" value="X-ray"/>
    <property type="resolution" value="1.35 A"/>
    <property type="chains" value="A=1-123"/>
</dbReference>
<dbReference type="PDB" id="2WDY">
    <property type="method" value="X-ray"/>
    <property type="resolution" value="1.40 A"/>
    <property type="chains" value="A=1-123"/>
</dbReference>
<dbReference type="PDBsum" id="2JBZ"/>
<dbReference type="PDBsum" id="2JCA"/>
<dbReference type="PDBsum" id="2WDO"/>
<dbReference type="PDBsum" id="2WDS"/>
<dbReference type="PDBsum" id="2WDY"/>
<dbReference type="SMR" id="O86785"/>
<dbReference type="STRING" id="100226.gene:17762393"/>
<dbReference type="PaxDb" id="100226-SCO4744"/>
<dbReference type="KEGG" id="sco:SCO4744"/>
<dbReference type="PATRIC" id="fig|100226.15.peg.4816"/>
<dbReference type="eggNOG" id="COG0736">
    <property type="taxonomic scope" value="Bacteria"/>
</dbReference>
<dbReference type="HOGENOM" id="CLU_089696_0_0_11"/>
<dbReference type="InParanoid" id="O86785"/>
<dbReference type="OrthoDB" id="517356at2"/>
<dbReference type="BRENDA" id="2.7.8.7">
    <property type="organism ID" value="5998"/>
</dbReference>
<dbReference type="EvolutionaryTrace" id="O86785"/>
<dbReference type="Proteomes" id="UP000001973">
    <property type="component" value="Chromosome"/>
</dbReference>
<dbReference type="GO" id="GO:0005737">
    <property type="term" value="C:cytoplasm"/>
    <property type="evidence" value="ECO:0007669"/>
    <property type="project" value="UniProtKB-SubCell"/>
</dbReference>
<dbReference type="GO" id="GO:0008897">
    <property type="term" value="F:holo-[acyl-carrier-protein] synthase activity"/>
    <property type="evidence" value="ECO:0007669"/>
    <property type="project" value="UniProtKB-UniRule"/>
</dbReference>
<dbReference type="GO" id="GO:0000287">
    <property type="term" value="F:magnesium ion binding"/>
    <property type="evidence" value="ECO:0007669"/>
    <property type="project" value="UniProtKB-UniRule"/>
</dbReference>
<dbReference type="GO" id="GO:0006633">
    <property type="term" value="P:fatty acid biosynthetic process"/>
    <property type="evidence" value="ECO:0007669"/>
    <property type="project" value="UniProtKB-UniRule"/>
</dbReference>
<dbReference type="Gene3D" id="3.90.470.20">
    <property type="entry name" value="4'-phosphopantetheinyl transferase domain"/>
    <property type="match status" value="1"/>
</dbReference>
<dbReference type="HAMAP" id="MF_00101">
    <property type="entry name" value="AcpS"/>
    <property type="match status" value="1"/>
</dbReference>
<dbReference type="InterPro" id="IPR008278">
    <property type="entry name" value="4-PPantetheinyl_Trfase_dom"/>
</dbReference>
<dbReference type="InterPro" id="IPR037143">
    <property type="entry name" value="4-PPantetheinyl_Trfase_dom_sf"/>
</dbReference>
<dbReference type="InterPro" id="IPR002582">
    <property type="entry name" value="ACPS"/>
</dbReference>
<dbReference type="InterPro" id="IPR004568">
    <property type="entry name" value="Ppantetheine-prot_Trfase_dom"/>
</dbReference>
<dbReference type="NCBIfam" id="TIGR00516">
    <property type="entry name" value="acpS"/>
    <property type="match status" value="1"/>
</dbReference>
<dbReference type="NCBIfam" id="TIGR00556">
    <property type="entry name" value="pantethn_trn"/>
    <property type="match status" value="1"/>
</dbReference>
<dbReference type="NCBIfam" id="NF000832">
    <property type="entry name" value="PRK00070.3-2"/>
    <property type="match status" value="1"/>
</dbReference>
<dbReference type="Pfam" id="PF01648">
    <property type="entry name" value="ACPS"/>
    <property type="match status" value="1"/>
</dbReference>
<dbReference type="SUPFAM" id="SSF56214">
    <property type="entry name" value="4'-phosphopantetheinyl transferase"/>
    <property type="match status" value="1"/>
</dbReference>
<name>ACPS_STRCO</name>
<feature type="chain" id="PRO_0000175711" description="Holo-[acyl-carrier-protein] synthase">
    <location>
        <begin position="1"/>
        <end position="123"/>
    </location>
</feature>
<feature type="binding site" evidence="1">
    <location>
        <position position="9"/>
    </location>
    <ligand>
        <name>Mg(2+)</name>
        <dbReference type="ChEBI" id="CHEBI:18420"/>
    </ligand>
</feature>
<feature type="binding site" evidence="1">
    <location>
        <position position="57"/>
    </location>
    <ligand>
        <name>Mg(2+)</name>
        <dbReference type="ChEBI" id="CHEBI:18420"/>
    </ligand>
</feature>
<feature type="strand" evidence="2">
    <location>
        <begin position="2"/>
        <end position="12"/>
    </location>
</feature>
<feature type="helix" evidence="2">
    <location>
        <begin position="13"/>
        <end position="22"/>
    </location>
</feature>
<feature type="helix" evidence="2">
    <location>
        <begin position="26"/>
        <end position="30"/>
    </location>
</feature>
<feature type="helix" evidence="2">
    <location>
        <begin position="33"/>
        <end position="36"/>
    </location>
</feature>
<feature type="strand" evidence="2">
    <location>
        <begin position="41"/>
        <end position="43"/>
    </location>
</feature>
<feature type="helix" evidence="2">
    <location>
        <begin position="46"/>
        <end position="62"/>
    </location>
</feature>
<feature type="helix" evidence="2">
    <location>
        <begin position="71"/>
        <end position="73"/>
    </location>
</feature>
<feature type="strand" evidence="2">
    <location>
        <begin position="74"/>
        <end position="78"/>
    </location>
</feature>
<feature type="strand" evidence="2">
    <location>
        <begin position="84"/>
        <end position="88"/>
    </location>
</feature>
<feature type="helix" evidence="2">
    <location>
        <begin position="90"/>
        <end position="99"/>
    </location>
</feature>
<feature type="strand" evidence="2">
    <location>
        <begin position="103"/>
        <end position="111"/>
    </location>
</feature>
<feature type="strand" evidence="2">
    <location>
        <begin position="114"/>
        <end position="123"/>
    </location>
</feature>
<comment type="function">
    <text evidence="1">Transfers the 4'-phosphopantetheine moiety from coenzyme A to a Ser of acyl-carrier-protein.</text>
</comment>
<comment type="catalytic activity">
    <reaction evidence="1">
        <text>apo-[ACP] + CoA = holo-[ACP] + adenosine 3',5'-bisphosphate + H(+)</text>
        <dbReference type="Rhea" id="RHEA:12068"/>
        <dbReference type="Rhea" id="RHEA-COMP:9685"/>
        <dbReference type="Rhea" id="RHEA-COMP:9690"/>
        <dbReference type="ChEBI" id="CHEBI:15378"/>
        <dbReference type="ChEBI" id="CHEBI:29999"/>
        <dbReference type="ChEBI" id="CHEBI:57287"/>
        <dbReference type="ChEBI" id="CHEBI:58343"/>
        <dbReference type="ChEBI" id="CHEBI:64479"/>
        <dbReference type="EC" id="2.7.8.7"/>
    </reaction>
</comment>
<comment type="cofactor">
    <cofactor evidence="1">
        <name>Mg(2+)</name>
        <dbReference type="ChEBI" id="CHEBI:18420"/>
    </cofactor>
</comment>
<comment type="subcellular location">
    <subcellularLocation>
        <location evidence="1">Cytoplasm</location>
    </subcellularLocation>
</comment>
<comment type="similarity">
    <text evidence="1">Belongs to the P-Pant transferase superfamily. AcpS family.</text>
</comment>
<reference key="1">
    <citation type="journal article" date="2002" name="Nature">
        <title>Complete genome sequence of the model actinomycete Streptomyces coelicolor A3(2).</title>
        <authorList>
            <person name="Bentley S.D."/>
            <person name="Chater K.F."/>
            <person name="Cerdeno-Tarraga A.-M."/>
            <person name="Challis G.L."/>
            <person name="Thomson N.R."/>
            <person name="James K.D."/>
            <person name="Harris D.E."/>
            <person name="Quail M.A."/>
            <person name="Kieser H."/>
            <person name="Harper D."/>
            <person name="Bateman A."/>
            <person name="Brown S."/>
            <person name="Chandra G."/>
            <person name="Chen C.W."/>
            <person name="Collins M."/>
            <person name="Cronin A."/>
            <person name="Fraser A."/>
            <person name="Goble A."/>
            <person name="Hidalgo J."/>
            <person name="Hornsby T."/>
            <person name="Howarth S."/>
            <person name="Huang C.-H."/>
            <person name="Kieser T."/>
            <person name="Larke L."/>
            <person name="Murphy L.D."/>
            <person name="Oliver K."/>
            <person name="O'Neil S."/>
            <person name="Rabbinowitsch E."/>
            <person name="Rajandream M.A."/>
            <person name="Rutherford K.M."/>
            <person name="Rutter S."/>
            <person name="Seeger K."/>
            <person name="Saunders D."/>
            <person name="Sharp S."/>
            <person name="Squares R."/>
            <person name="Squares S."/>
            <person name="Taylor K."/>
            <person name="Warren T."/>
            <person name="Wietzorrek A."/>
            <person name="Woodward J.R."/>
            <person name="Barrell B.G."/>
            <person name="Parkhill J."/>
            <person name="Hopwood D.A."/>
        </authorList>
    </citation>
    <scope>NUCLEOTIDE SEQUENCE [LARGE SCALE GENOMIC DNA]</scope>
    <source>
        <strain>ATCC BAA-471 / A3(2) / M145</strain>
    </source>
</reference>
<evidence type="ECO:0000255" key="1">
    <source>
        <dbReference type="HAMAP-Rule" id="MF_00101"/>
    </source>
</evidence>
<evidence type="ECO:0007829" key="2">
    <source>
        <dbReference type="PDB" id="2WDS"/>
    </source>
</evidence>
<gene>
    <name evidence="1" type="primary">acpS</name>
    <name type="ordered locus">SCO4744</name>
    <name type="ORF">SC6G4.22c</name>
</gene>